<organism>
    <name type="scientific">Klebsiella pneumoniae subsp. pneumoniae (strain ATCC 700721 / MGH 78578)</name>
    <dbReference type="NCBI Taxonomy" id="272620"/>
    <lineage>
        <taxon>Bacteria</taxon>
        <taxon>Pseudomonadati</taxon>
        <taxon>Pseudomonadota</taxon>
        <taxon>Gammaproteobacteria</taxon>
        <taxon>Enterobacterales</taxon>
        <taxon>Enterobacteriaceae</taxon>
        <taxon>Klebsiella/Raoultella group</taxon>
        <taxon>Klebsiella</taxon>
        <taxon>Klebsiella pneumoniae complex</taxon>
    </lineage>
</organism>
<protein>
    <recommendedName>
        <fullName evidence="1">Hydroxyacylglutathione hydrolase</fullName>
        <ecNumber evidence="1">3.1.2.6</ecNumber>
    </recommendedName>
    <alternativeName>
        <fullName evidence="1">Glyoxalase II</fullName>
        <shortName evidence="1">Glx II</shortName>
    </alternativeName>
</protein>
<dbReference type="EC" id="3.1.2.6" evidence="1"/>
<dbReference type="EMBL" id="CP000647">
    <property type="protein sequence ID" value="ABR75681.1"/>
    <property type="molecule type" value="Genomic_DNA"/>
</dbReference>
<dbReference type="RefSeq" id="WP_004145833.1">
    <property type="nucleotide sequence ID" value="NC_009648.1"/>
</dbReference>
<dbReference type="SMR" id="A6T510"/>
<dbReference type="STRING" id="272620.KPN_00227"/>
<dbReference type="jPOST" id="A6T510"/>
<dbReference type="PaxDb" id="272620-KPN_00227"/>
<dbReference type="EnsemblBacteria" id="ABR75681">
    <property type="protein sequence ID" value="ABR75681"/>
    <property type="gene ID" value="KPN_00227"/>
</dbReference>
<dbReference type="KEGG" id="kpn:KPN_00227"/>
<dbReference type="HOGENOM" id="CLU_030571_4_1_6"/>
<dbReference type="UniPathway" id="UPA00619">
    <property type="reaction ID" value="UER00676"/>
</dbReference>
<dbReference type="Proteomes" id="UP000000265">
    <property type="component" value="Chromosome"/>
</dbReference>
<dbReference type="GO" id="GO:0004416">
    <property type="term" value="F:hydroxyacylglutathione hydrolase activity"/>
    <property type="evidence" value="ECO:0007669"/>
    <property type="project" value="UniProtKB-UniRule"/>
</dbReference>
<dbReference type="GO" id="GO:0046872">
    <property type="term" value="F:metal ion binding"/>
    <property type="evidence" value="ECO:0007669"/>
    <property type="project" value="UniProtKB-KW"/>
</dbReference>
<dbReference type="GO" id="GO:0019243">
    <property type="term" value="P:methylglyoxal catabolic process to D-lactate via S-lactoyl-glutathione"/>
    <property type="evidence" value="ECO:0007669"/>
    <property type="project" value="InterPro"/>
</dbReference>
<dbReference type="CDD" id="cd07723">
    <property type="entry name" value="hydroxyacylglutathione_hydrolase_MBL-fold"/>
    <property type="match status" value="1"/>
</dbReference>
<dbReference type="Gene3D" id="3.60.15.10">
    <property type="entry name" value="Ribonuclease Z/Hydroxyacylglutathione hydrolase-like"/>
    <property type="match status" value="1"/>
</dbReference>
<dbReference type="HAMAP" id="MF_01374">
    <property type="entry name" value="Glyoxalase_2"/>
    <property type="match status" value="1"/>
</dbReference>
<dbReference type="InterPro" id="IPR035680">
    <property type="entry name" value="Clx_II_MBL"/>
</dbReference>
<dbReference type="InterPro" id="IPR050110">
    <property type="entry name" value="Glyoxalase_II_hydrolase"/>
</dbReference>
<dbReference type="InterPro" id="IPR032282">
    <property type="entry name" value="HAGH_C"/>
</dbReference>
<dbReference type="InterPro" id="IPR017782">
    <property type="entry name" value="Hydroxyacylglutathione_Hdrlase"/>
</dbReference>
<dbReference type="InterPro" id="IPR001279">
    <property type="entry name" value="Metallo-B-lactamas"/>
</dbReference>
<dbReference type="InterPro" id="IPR036866">
    <property type="entry name" value="RibonucZ/Hydroxyglut_hydro"/>
</dbReference>
<dbReference type="NCBIfam" id="TIGR03413">
    <property type="entry name" value="GSH_gloB"/>
    <property type="match status" value="1"/>
</dbReference>
<dbReference type="NCBIfam" id="NF007597">
    <property type="entry name" value="PRK10241.1"/>
    <property type="match status" value="1"/>
</dbReference>
<dbReference type="PANTHER" id="PTHR43705">
    <property type="entry name" value="HYDROXYACYLGLUTATHIONE HYDROLASE"/>
    <property type="match status" value="1"/>
</dbReference>
<dbReference type="PANTHER" id="PTHR43705:SF1">
    <property type="entry name" value="HYDROXYACYLGLUTATHIONE HYDROLASE GLOB"/>
    <property type="match status" value="1"/>
</dbReference>
<dbReference type="Pfam" id="PF16123">
    <property type="entry name" value="HAGH_C"/>
    <property type="match status" value="1"/>
</dbReference>
<dbReference type="Pfam" id="PF00753">
    <property type="entry name" value="Lactamase_B"/>
    <property type="match status" value="1"/>
</dbReference>
<dbReference type="PIRSF" id="PIRSF005457">
    <property type="entry name" value="Glx"/>
    <property type="match status" value="1"/>
</dbReference>
<dbReference type="SMART" id="SM00849">
    <property type="entry name" value="Lactamase_B"/>
    <property type="match status" value="1"/>
</dbReference>
<dbReference type="SUPFAM" id="SSF56281">
    <property type="entry name" value="Metallo-hydrolase/oxidoreductase"/>
    <property type="match status" value="1"/>
</dbReference>
<proteinExistence type="inferred from homology"/>
<name>GLO2_KLEP7</name>
<comment type="function">
    <text evidence="1">Thiolesterase that catalyzes the hydrolysis of S-D-lactoyl-glutathione to form glutathione and D-lactic acid.</text>
</comment>
<comment type="catalytic activity">
    <reaction evidence="1">
        <text>an S-(2-hydroxyacyl)glutathione + H2O = a 2-hydroxy carboxylate + glutathione + H(+)</text>
        <dbReference type="Rhea" id="RHEA:21864"/>
        <dbReference type="ChEBI" id="CHEBI:15377"/>
        <dbReference type="ChEBI" id="CHEBI:15378"/>
        <dbReference type="ChEBI" id="CHEBI:57925"/>
        <dbReference type="ChEBI" id="CHEBI:58896"/>
        <dbReference type="ChEBI" id="CHEBI:71261"/>
        <dbReference type="EC" id="3.1.2.6"/>
    </reaction>
</comment>
<comment type="cofactor">
    <cofactor evidence="1">
        <name>Zn(2+)</name>
        <dbReference type="ChEBI" id="CHEBI:29105"/>
    </cofactor>
    <text evidence="1">Binds 2 Zn(2+) ions per subunit.</text>
</comment>
<comment type="pathway">
    <text evidence="1">Secondary metabolite metabolism; methylglyoxal degradation; (R)-lactate from methylglyoxal: step 2/2.</text>
</comment>
<comment type="subunit">
    <text evidence="1">Monomer.</text>
</comment>
<comment type="similarity">
    <text evidence="1">Belongs to the metallo-beta-lactamase superfamily. Glyoxalase II family.</text>
</comment>
<reference key="1">
    <citation type="submission" date="2006-09" db="EMBL/GenBank/DDBJ databases">
        <authorList>
            <consortium name="The Klebsiella pneumonia Genome Sequencing Project"/>
            <person name="McClelland M."/>
            <person name="Sanderson E.K."/>
            <person name="Spieth J."/>
            <person name="Clifton W.S."/>
            <person name="Latreille P."/>
            <person name="Sabo A."/>
            <person name="Pepin K."/>
            <person name="Bhonagiri V."/>
            <person name="Porwollik S."/>
            <person name="Ali J."/>
            <person name="Wilson R.K."/>
        </authorList>
    </citation>
    <scope>NUCLEOTIDE SEQUENCE [LARGE SCALE GENOMIC DNA]</scope>
    <source>
        <strain>ATCC 700721 / MGH 78578</strain>
    </source>
</reference>
<sequence>MNLISIPAFQDNYIWVLSENNGRCIIVDPGEAAPVLAAIEENQWQPEAILLTHHHQDHVGGVKQLREKFPSIVVYGPAETQDKGVTQVVGDGDRLSILGHDFSIFSTPGHTLGHICYYSEPYLFCGDTMFSGGCGRLFEGTAEQMYQSFMKINALPEETLICCAHEYTLANMKFALSILPDDRDINDYYHKVNELRAKKQKTLPVTLKNERRINLFLRVNDIDLIDKINKETNLQHSVARFAWLRSKKDDF</sequence>
<gene>
    <name evidence="1" type="primary">gloB</name>
    <name type="ordered locus">KPN78578_02200</name>
    <name type="ORF">KPN_00227</name>
</gene>
<accession>A6T510</accession>
<evidence type="ECO:0000255" key="1">
    <source>
        <dbReference type="HAMAP-Rule" id="MF_01374"/>
    </source>
</evidence>
<keyword id="KW-0378">Hydrolase</keyword>
<keyword id="KW-0479">Metal-binding</keyword>
<keyword id="KW-0862">Zinc</keyword>
<feature type="chain" id="PRO_1000068220" description="Hydroxyacylglutathione hydrolase">
    <location>
        <begin position="1"/>
        <end position="251"/>
    </location>
</feature>
<feature type="binding site" evidence="1">
    <location>
        <position position="53"/>
    </location>
    <ligand>
        <name>Zn(2+)</name>
        <dbReference type="ChEBI" id="CHEBI:29105"/>
        <label>1</label>
    </ligand>
</feature>
<feature type="binding site" evidence="1">
    <location>
        <position position="55"/>
    </location>
    <ligand>
        <name>Zn(2+)</name>
        <dbReference type="ChEBI" id="CHEBI:29105"/>
        <label>1</label>
    </ligand>
</feature>
<feature type="binding site" evidence="1">
    <location>
        <position position="57"/>
    </location>
    <ligand>
        <name>Zn(2+)</name>
        <dbReference type="ChEBI" id="CHEBI:29105"/>
        <label>2</label>
    </ligand>
</feature>
<feature type="binding site" evidence="1">
    <location>
        <position position="58"/>
    </location>
    <ligand>
        <name>Zn(2+)</name>
        <dbReference type="ChEBI" id="CHEBI:29105"/>
        <label>2</label>
    </ligand>
</feature>
<feature type="binding site" evidence="1">
    <location>
        <position position="110"/>
    </location>
    <ligand>
        <name>Zn(2+)</name>
        <dbReference type="ChEBI" id="CHEBI:29105"/>
        <label>1</label>
    </ligand>
</feature>
<feature type="binding site" evidence="1">
    <location>
        <position position="127"/>
    </location>
    <ligand>
        <name>Zn(2+)</name>
        <dbReference type="ChEBI" id="CHEBI:29105"/>
        <label>1</label>
    </ligand>
</feature>
<feature type="binding site" evidence="1">
    <location>
        <position position="127"/>
    </location>
    <ligand>
        <name>Zn(2+)</name>
        <dbReference type="ChEBI" id="CHEBI:29105"/>
        <label>2</label>
    </ligand>
</feature>
<feature type="binding site" evidence="1">
    <location>
        <position position="165"/>
    </location>
    <ligand>
        <name>Zn(2+)</name>
        <dbReference type="ChEBI" id="CHEBI:29105"/>
        <label>2</label>
    </ligand>
</feature>